<name>RPPH_SHESH</name>
<feature type="chain" id="PRO_1000078979" description="RNA pyrophosphohydrolase">
    <location>
        <begin position="1"/>
        <end position="172"/>
    </location>
</feature>
<feature type="domain" description="Nudix hydrolase" evidence="1">
    <location>
        <begin position="6"/>
        <end position="149"/>
    </location>
</feature>
<feature type="short sequence motif" description="Nudix box">
    <location>
        <begin position="38"/>
        <end position="59"/>
    </location>
</feature>
<protein>
    <recommendedName>
        <fullName evidence="1">RNA pyrophosphohydrolase</fullName>
        <ecNumber evidence="1">3.6.1.-</ecNumber>
    </recommendedName>
    <alternativeName>
        <fullName evidence="1">(Di)nucleoside polyphosphate hydrolase</fullName>
    </alternativeName>
</protein>
<keyword id="KW-0378">Hydrolase</keyword>
<keyword id="KW-1185">Reference proteome</keyword>
<gene>
    <name evidence="1" type="primary">rppH</name>
    <name evidence="1" type="synonym">nudH</name>
    <name type="ordered locus">Ssed_1132</name>
</gene>
<accession>A8FSC0</accession>
<sequence length="172" mass="20623">MIDSDGFRANVGIIICNRFGQVMWARRFGQHSWQFPQGGVDEGETPEEAMFRELYEEVGLRPEHVQILTSTRSWLRYRLPKRLIRQDSKPVCIGQKQKWFLLQLKSNESAIDLNACGHPEFDDWRWVSYWYPVRQVVSFKRDVYRKVMKEFAPTALPFQTREHHHSRRGRRR</sequence>
<evidence type="ECO:0000255" key="1">
    <source>
        <dbReference type="HAMAP-Rule" id="MF_00298"/>
    </source>
</evidence>
<comment type="function">
    <text evidence="1">Accelerates the degradation of transcripts by removing pyrophosphate from the 5'-end of triphosphorylated RNA, leading to a more labile monophosphorylated state that can stimulate subsequent ribonuclease cleavage.</text>
</comment>
<comment type="cofactor">
    <cofactor evidence="1">
        <name>a divalent metal cation</name>
        <dbReference type="ChEBI" id="CHEBI:60240"/>
    </cofactor>
</comment>
<comment type="similarity">
    <text evidence="1">Belongs to the Nudix hydrolase family. RppH subfamily.</text>
</comment>
<dbReference type="EC" id="3.6.1.-" evidence="1"/>
<dbReference type="EMBL" id="CP000821">
    <property type="protein sequence ID" value="ABV35743.1"/>
    <property type="molecule type" value="Genomic_DNA"/>
</dbReference>
<dbReference type="RefSeq" id="WP_012141479.1">
    <property type="nucleotide sequence ID" value="NC_009831.1"/>
</dbReference>
<dbReference type="SMR" id="A8FSC0"/>
<dbReference type="STRING" id="425104.Ssed_1132"/>
<dbReference type="KEGG" id="sse:Ssed_1132"/>
<dbReference type="eggNOG" id="COG0494">
    <property type="taxonomic scope" value="Bacteria"/>
</dbReference>
<dbReference type="HOGENOM" id="CLU_087195_3_1_6"/>
<dbReference type="OrthoDB" id="9816040at2"/>
<dbReference type="Proteomes" id="UP000002015">
    <property type="component" value="Chromosome"/>
</dbReference>
<dbReference type="GO" id="GO:0005737">
    <property type="term" value="C:cytoplasm"/>
    <property type="evidence" value="ECO:0007669"/>
    <property type="project" value="TreeGrafter"/>
</dbReference>
<dbReference type="GO" id="GO:0034353">
    <property type="term" value="F:mRNA 5'-diphosphatase activity"/>
    <property type="evidence" value="ECO:0007669"/>
    <property type="project" value="TreeGrafter"/>
</dbReference>
<dbReference type="GO" id="GO:0006402">
    <property type="term" value="P:mRNA catabolic process"/>
    <property type="evidence" value="ECO:0007669"/>
    <property type="project" value="TreeGrafter"/>
</dbReference>
<dbReference type="CDD" id="cd03671">
    <property type="entry name" value="NUDIX_Ap4A_hydrolase_plant_like"/>
    <property type="match status" value="1"/>
</dbReference>
<dbReference type="FunFam" id="3.90.79.10:FF:000001">
    <property type="entry name" value="RNA pyrophosphohydrolase"/>
    <property type="match status" value="1"/>
</dbReference>
<dbReference type="Gene3D" id="3.90.79.10">
    <property type="entry name" value="Nucleoside Triphosphate Pyrophosphohydrolase"/>
    <property type="match status" value="1"/>
</dbReference>
<dbReference type="HAMAP" id="MF_00298">
    <property type="entry name" value="Nudix_RppH"/>
    <property type="match status" value="1"/>
</dbReference>
<dbReference type="InterPro" id="IPR020476">
    <property type="entry name" value="Nudix_hydrolase"/>
</dbReference>
<dbReference type="InterPro" id="IPR015797">
    <property type="entry name" value="NUDIX_hydrolase-like_dom_sf"/>
</dbReference>
<dbReference type="InterPro" id="IPR020084">
    <property type="entry name" value="NUDIX_hydrolase_CS"/>
</dbReference>
<dbReference type="InterPro" id="IPR000086">
    <property type="entry name" value="NUDIX_hydrolase_dom"/>
</dbReference>
<dbReference type="InterPro" id="IPR022927">
    <property type="entry name" value="RppH"/>
</dbReference>
<dbReference type="NCBIfam" id="NF001934">
    <property type="entry name" value="PRK00714.1-1"/>
    <property type="match status" value="1"/>
</dbReference>
<dbReference type="NCBIfam" id="NF001937">
    <property type="entry name" value="PRK00714.1-4"/>
    <property type="match status" value="1"/>
</dbReference>
<dbReference type="NCBIfam" id="NF001938">
    <property type="entry name" value="PRK00714.1-5"/>
    <property type="match status" value="1"/>
</dbReference>
<dbReference type="PANTHER" id="PTHR23114">
    <property type="entry name" value="M7GPPPN-MRNA HYDROLASE"/>
    <property type="match status" value="1"/>
</dbReference>
<dbReference type="PANTHER" id="PTHR23114:SF17">
    <property type="entry name" value="M7GPPPN-MRNA HYDROLASE"/>
    <property type="match status" value="1"/>
</dbReference>
<dbReference type="Pfam" id="PF00293">
    <property type="entry name" value="NUDIX"/>
    <property type="match status" value="1"/>
</dbReference>
<dbReference type="PRINTS" id="PR00502">
    <property type="entry name" value="NUDIXFAMILY"/>
</dbReference>
<dbReference type="SUPFAM" id="SSF55811">
    <property type="entry name" value="Nudix"/>
    <property type="match status" value="1"/>
</dbReference>
<dbReference type="PROSITE" id="PS51462">
    <property type="entry name" value="NUDIX"/>
    <property type="match status" value="1"/>
</dbReference>
<dbReference type="PROSITE" id="PS00893">
    <property type="entry name" value="NUDIX_BOX"/>
    <property type="match status" value="1"/>
</dbReference>
<proteinExistence type="inferred from homology"/>
<organism>
    <name type="scientific">Shewanella sediminis (strain HAW-EB3)</name>
    <dbReference type="NCBI Taxonomy" id="425104"/>
    <lineage>
        <taxon>Bacteria</taxon>
        <taxon>Pseudomonadati</taxon>
        <taxon>Pseudomonadota</taxon>
        <taxon>Gammaproteobacteria</taxon>
        <taxon>Alteromonadales</taxon>
        <taxon>Shewanellaceae</taxon>
        <taxon>Shewanella</taxon>
    </lineage>
</organism>
<reference key="1">
    <citation type="submission" date="2007-08" db="EMBL/GenBank/DDBJ databases">
        <title>Complete sequence of Shewanella sediminis HAW-EB3.</title>
        <authorList>
            <consortium name="US DOE Joint Genome Institute"/>
            <person name="Copeland A."/>
            <person name="Lucas S."/>
            <person name="Lapidus A."/>
            <person name="Barry K."/>
            <person name="Glavina del Rio T."/>
            <person name="Dalin E."/>
            <person name="Tice H."/>
            <person name="Pitluck S."/>
            <person name="Chertkov O."/>
            <person name="Brettin T."/>
            <person name="Bruce D."/>
            <person name="Detter J.C."/>
            <person name="Han C."/>
            <person name="Schmutz J."/>
            <person name="Larimer F."/>
            <person name="Land M."/>
            <person name="Hauser L."/>
            <person name="Kyrpides N."/>
            <person name="Kim E."/>
            <person name="Zhao J.-S."/>
            <person name="Richardson P."/>
        </authorList>
    </citation>
    <scope>NUCLEOTIDE SEQUENCE [LARGE SCALE GENOMIC DNA]</scope>
    <source>
        <strain>HAW-EB3</strain>
    </source>
</reference>